<accession>Q09KQ6</accession>
<sequence>MPDAVVFSPGGYRYIPAVFQYSAGIAAEPGFEIERVRFHRPVPLAEAFVAVESHLRAIGRPTTSFAQCELRSPDPFNDQGFIDFNTEYVKTLERWGIYKDRVNPVARTNVCPMYDKPTTPSMFAFSYTVPTTSAAKRPSFQLAGGGDARGGSAPYKDRIVAFGDTSPEGLREKVVFVIEEMESRLKTLGLGWADAVSTQLYTVQNIGHLVGPELARRGCGAGGLVWNYTRPPVIGLEYEMDVRGAVRETVL</sequence>
<name>CNBZ_COMTE</name>
<organism>
    <name type="scientific">Comamonas testosteroni</name>
    <name type="common">Pseudomonas testosteroni</name>
    <dbReference type="NCBI Taxonomy" id="285"/>
    <lineage>
        <taxon>Bacteria</taxon>
        <taxon>Pseudomonadati</taxon>
        <taxon>Pseudomonadota</taxon>
        <taxon>Betaproteobacteria</taxon>
        <taxon>Burkholderiales</taxon>
        <taxon>Comamonadaceae</taxon>
        <taxon>Comamonas</taxon>
    </lineage>
</organism>
<feature type="initiator methionine" description="Removed" evidence="2">
    <location>
        <position position="1"/>
    </location>
</feature>
<feature type="chain" id="PRO_0000442204" description="2-amino-5-chloromuconate deaminase">
    <location>
        <begin position="2"/>
        <end position="251"/>
    </location>
</feature>
<dbReference type="EC" id="3.5.99.11" evidence="1 2"/>
<dbReference type="EMBL" id="EF079106">
    <property type="protein sequence ID" value="ABM06247.1"/>
    <property type="molecule type" value="Genomic_DNA"/>
</dbReference>
<dbReference type="EMBL" id="DQ875599">
    <property type="protein sequence ID" value="ABI49649.1"/>
    <property type="molecule type" value="Genomic_DNA"/>
</dbReference>
<dbReference type="RefSeq" id="YP_001967725.1">
    <property type="nucleotide sequence ID" value="NC_010935.1"/>
</dbReference>
<dbReference type="KEGG" id="ag:ABI49649"/>
<dbReference type="PATRIC" id="fig|688245.4.peg.85"/>
<dbReference type="UniPathway" id="UPA00923"/>
<dbReference type="UniPathway" id="UPA01033"/>
<dbReference type="GO" id="GO:0016810">
    <property type="term" value="F:hydrolase activity, acting on carbon-nitrogen (but not peptide) bonds"/>
    <property type="evidence" value="ECO:0000314"/>
    <property type="project" value="UniProtKB"/>
</dbReference>
<dbReference type="GO" id="GO:0009056">
    <property type="term" value="P:catabolic process"/>
    <property type="evidence" value="ECO:0007669"/>
    <property type="project" value="UniProtKB-KW"/>
</dbReference>
<gene>
    <name evidence="4" type="primary">cnbZ</name>
    <name evidence="3" type="synonym">cnbH</name>
</gene>
<keyword id="KW-0058">Aromatic hydrocarbons catabolism</keyword>
<keyword id="KW-0903">Direct protein sequencing</keyword>
<keyword id="KW-0378">Hydrolase</keyword>
<keyword id="KW-0614">Plasmid</keyword>
<evidence type="ECO:0000269" key="1">
    <source>
    </source>
</evidence>
<evidence type="ECO:0000269" key="2">
    <source>
    </source>
</evidence>
<evidence type="ECO:0000303" key="3">
    <source>
    </source>
</evidence>
<evidence type="ECO:0000303" key="4">
    <source>
    </source>
</evidence>
<evidence type="ECO:0000312" key="5">
    <source>
        <dbReference type="EMBL" id="ABI49649.1"/>
    </source>
</evidence>
<evidence type="ECO:0000312" key="6">
    <source>
        <dbReference type="EMBL" id="ABM06247.1"/>
    </source>
</evidence>
<proteinExistence type="evidence at protein level"/>
<geneLocation type="plasmid" evidence="5">
    <name>pCNB1</name>
</geneLocation>
<comment type="function">
    <text evidence="1 2">Involved in the biodegradation of xenobiotic compounds, such as nitrobenzene and 4-chloronitrobenzene (4-CNB) (PubMed:16517619). CnbZ preferentially catalyzes the deamination of 2-amino-5-chloromuconate (2A5CM) to yield 2-hydroxy-5-chloromuconate (2H5CM). Also able to catalyze the deamination of 2-aminomuconate to yield 2-hydroxymuconate, which spontaneously converts into its keto form, 2-oxalocrotonate.</text>
</comment>
<comment type="catalytic activity">
    <reaction evidence="1 2">
        <text>(2Z,4E)-2-aminomuconate + H2O = (2Z,4E)-2-hydroxyhexa-2,4-dienedioate + NH4(+)</text>
        <dbReference type="Rhea" id="RHEA:49460"/>
        <dbReference type="ChEBI" id="CHEBI:15377"/>
        <dbReference type="ChEBI" id="CHEBI:28080"/>
        <dbReference type="ChEBI" id="CHEBI:28938"/>
        <dbReference type="ChEBI" id="CHEBI:77859"/>
        <dbReference type="EC" id="3.5.99.11"/>
    </reaction>
</comment>
<comment type="activity regulation">
    <text evidence="2">Cysteine residue modifying agents such as p-chloromercuribenzoate and the SH-binding metals Zn(2+), Ni(2+) and Cu(2+) completely inhibit deaminase activity, whereas Ca(2+), Mg(2+) and the histidine residue-modifying agent diethyl pyrocarbonate inhibit the activity by 23 to 50%.</text>
</comment>
<comment type="biophysicochemical properties">
    <kinetics>
        <KM evidence="2">3.9 uM for 2-amino-5-chloromuconate</KM>
        <KM evidence="2">8.8 uM for 2-aminomuconate</KM>
        <Vmax evidence="2">196.0 umol/min/mg enzyme for 2-amino-5-chloromuconate as substrate</Vmax>
        <Vmax evidence="2">147.0 umol/min/mg enzyme for 2-aminomuconate as substrate</Vmax>
    </kinetics>
</comment>
<comment type="pathway">
    <text evidence="1">Xenobiotic degradation; 4-chloronitrobenzene degradation.</text>
</comment>
<comment type="pathway">
    <text evidence="1">Xenobiotic degradation; nitrobenzene degradation.</text>
</comment>
<comment type="subunit">
    <text evidence="2">Monomer.</text>
</comment>
<comment type="induction">
    <text evidence="2">By 4-chloronitrobenzene.</text>
</comment>
<reference key="1">
    <citation type="journal article" date="2005" name="Arch. Microbiol.">
        <title>A novel 2-aminophenol 1,6-dioxygenase involved in the degradation of p-chloronitrobenzene by Comamonas strain CNB-1: purification, properties, genetic cloning and expression in Escherichia coli.</title>
        <authorList>
            <person name="Wu J.F."/>
            <person name="Sun C.W."/>
            <person name="Jiang C.Y."/>
            <person name="Liu Z.P."/>
            <person name="Liu S.J."/>
        </authorList>
    </citation>
    <scope>NUCLEOTIDE SEQUENCE [GENOMIC DNA]</scope>
    <source>
        <strain>CNB-1</strain>
        <plasmid evidence="6">pCNB1</plasmid>
    </source>
</reference>
<reference key="2">
    <citation type="journal article" date="2006" name="Appl. Environ. Microbiol.">
        <title>Novel partial reductive pathway for 4-chloronitrobenzene and nitrobenzene degradation in Comamonas sp. strain CNB-1.</title>
        <authorList>
            <person name="Wu J.F."/>
            <person name="Jiang C.Y."/>
            <person name="Wang B.J."/>
            <person name="Ma Y.F."/>
            <person name="Liu Z.P."/>
            <person name="Liu S.J."/>
        </authorList>
    </citation>
    <scope>NUCLEOTIDE SEQUENCE [GENOMIC DNA]</scope>
    <scope>FUNCTION</scope>
    <scope>CATALYTIC ACTIVITY</scope>
    <scope>PATHWAY</scope>
    <source>
        <strain>CNB-1</strain>
        <plasmid evidence="6">pCNB1</plasmid>
    </source>
</reference>
<reference key="3">
    <citation type="journal article" date="2007" name="Appl. Environ. Microbiol.">
        <title>Nucleotide sequence of plasmid pCNB1 from Comamonas strain CNB-1 reveals novel genetic organization and evolution for 4-chloronitrobenzene degradation.</title>
        <authorList>
            <person name="Ma Y.F."/>
            <person name="Wu J.F."/>
            <person name="Wang S.Y."/>
            <person name="Jiang C.Y."/>
            <person name="Zhang Y."/>
            <person name="Qi S.W."/>
            <person name="Liu L."/>
            <person name="Zhao G.P."/>
            <person name="Liu S.J."/>
        </authorList>
    </citation>
    <scope>NUCLEOTIDE SEQUENCE [GENOMIC DNA]</scope>
    <source>
        <strain>CNB-1</strain>
        <plasmid evidence="6">pCNB1</plasmid>
    </source>
</reference>
<reference key="4">
    <citation type="journal article" date="2007" name="J. Bacteriol.">
        <title>A novel deaminase involved in chloronitrobenzene and nitrobenzene degradation with Comamonas sp. strain CNB-1.</title>
        <authorList>
            <person name="Liu L."/>
            <person name="Wu J.F."/>
            <person name="Ma Y.F."/>
            <person name="Wang S.Y."/>
            <person name="Zhao G.P."/>
            <person name="Liu S.J."/>
        </authorList>
    </citation>
    <scope>NUCLEOTIDE SEQUENCE [GENOMIC DNA]</scope>
    <scope>PROTEIN SEQUENCE OF 2-9</scope>
    <scope>FUNCTION</scope>
    <scope>CATALYTIC ACTIVITY</scope>
    <scope>BIOPHYSICOCHEMICAL PROPERTIES</scope>
    <scope>ACTIVITY REGULATION</scope>
    <scope>INDUCTION</scope>
    <scope>PATHWAY</scope>
    <scope>SUBUNIT</scope>
    <source>
        <strain evidence="5">CNB-1</strain>
        <plasmid evidence="5">pCNB1</plasmid>
    </source>
</reference>
<protein>
    <recommendedName>
        <fullName evidence="3">2-amino-5-chloromuconate deaminase</fullName>
        <shortName evidence="3">2A5CM deaminase</shortName>
    </recommendedName>
    <alternativeName>
        <fullName evidence="4">2-aminomuconate deaminase (2-hydroxymuconate-forming)</fullName>
        <ecNumber evidence="1 2">3.5.99.11</ecNumber>
    </alternativeName>
</protein>